<protein>
    <recommendedName>
        <fullName>Multidrug resistance protein mmr</fullName>
    </recommendedName>
</protein>
<reference key="1">
    <citation type="journal article" date="2005" name="Proc. Natl. Acad. Sci. U.S.A.">
        <title>The complete genome sequence of Mycobacterium avium subspecies paratuberculosis.</title>
        <authorList>
            <person name="Li L."/>
            <person name="Bannantine J.P."/>
            <person name="Zhang Q."/>
            <person name="Amonsin A."/>
            <person name="May B.J."/>
            <person name="Alt D."/>
            <person name="Banerji N."/>
            <person name="Kanjilal S."/>
            <person name="Kapur V."/>
        </authorList>
    </citation>
    <scope>NUCLEOTIDE SEQUENCE [LARGE SCALE GENOMIC DNA]</scope>
    <source>
        <strain>ATCC BAA-968 / K-10</strain>
    </source>
</reference>
<comment type="function">
    <text evidence="1">Multidrug efflux pump. Confers resistance to tetraphenylphosphonium (TPP), erythromycin, ethidium bromide, acriflavine, safranin O and pyronin Y (By similarity).</text>
</comment>
<comment type="subcellular location">
    <subcellularLocation>
        <location evidence="3">Cell membrane</location>
        <topology evidence="3">Multi-pass membrane protein</topology>
    </subcellularLocation>
</comment>
<comment type="similarity">
    <text evidence="3">Belongs to the drug/metabolite transporter (DMT) superfamily. Small multidrug resistance (SMR) (TC 2.A.7.1) family. Mmr subfamily.</text>
</comment>
<comment type="sequence caution" evidence="3">
    <conflict type="erroneous initiation">
        <sequence resource="EMBL-CDS" id="AAS05675"/>
    </conflict>
</comment>
<gene>
    <name type="primary">mmr</name>
    <name type="synonym">emrE</name>
    <name type="ordered locus">MAP_3127</name>
</gene>
<proteinExistence type="inferred from homology"/>
<evidence type="ECO:0000250" key="1"/>
<evidence type="ECO:0000255" key="2"/>
<evidence type="ECO:0000305" key="3"/>
<sequence length="107" mass="11153">MTYLFLICAILAEVVATSLLKSTQGFTRLWPTVICLLGYAVSFALLAVSISRGMQTDVAYALWSAIGTALIVLIAVLFLGSPISVTKVVGVGLIIAGVVTLNLTGAH</sequence>
<feature type="chain" id="PRO_0000108119" description="Multidrug resistance protein mmr">
    <location>
        <begin position="1"/>
        <end position="107"/>
    </location>
</feature>
<feature type="transmembrane region" description="Helical" evidence="2">
    <location>
        <begin position="2"/>
        <end position="19"/>
    </location>
</feature>
<feature type="transmembrane region" description="Helical" evidence="2">
    <location>
        <begin position="29"/>
        <end position="51"/>
    </location>
</feature>
<feature type="transmembrane region" description="Helical" evidence="2">
    <location>
        <begin position="58"/>
        <end position="80"/>
    </location>
</feature>
<feature type="transmembrane region" description="Helical" evidence="2">
    <location>
        <begin position="84"/>
        <end position="106"/>
    </location>
</feature>
<organism>
    <name type="scientific">Mycolicibacterium paratuberculosis (strain ATCC BAA-968 / K-10)</name>
    <name type="common">Mycobacterium paratuberculosis</name>
    <dbReference type="NCBI Taxonomy" id="262316"/>
    <lineage>
        <taxon>Bacteria</taxon>
        <taxon>Bacillati</taxon>
        <taxon>Actinomycetota</taxon>
        <taxon>Actinomycetes</taxon>
        <taxon>Mycobacteriales</taxon>
        <taxon>Mycobacteriaceae</taxon>
        <taxon>Mycobacterium</taxon>
        <taxon>Mycobacterium avium complex (MAC)</taxon>
    </lineage>
</organism>
<accession>Q73V87</accession>
<keyword id="KW-0046">Antibiotic resistance</keyword>
<keyword id="KW-1003">Cell membrane</keyword>
<keyword id="KW-0472">Membrane</keyword>
<keyword id="KW-1185">Reference proteome</keyword>
<keyword id="KW-0812">Transmembrane</keyword>
<keyword id="KW-1133">Transmembrane helix</keyword>
<keyword id="KW-0813">Transport</keyword>
<dbReference type="EMBL" id="AE016958">
    <property type="protein sequence ID" value="AAS05675.1"/>
    <property type="status" value="ALT_INIT"/>
    <property type="molecule type" value="Genomic_DNA"/>
</dbReference>
<dbReference type="RefSeq" id="WP_003874907.1">
    <property type="nucleotide sequence ID" value="NZ_CP106873.1"/>
</dbReference>
<dbReference type="SMR" id="Q73V87"/>
<dbReference type="STRING" id="262316.MAP_3127"/>
<dbReference type="KEGG" id="mpa:MAP_3127"/>
<dbReference type="eggNOG" id="COG2076">
    <property type="taxonomic scope" value="Bacteria"/>
</dbReference>
<dbReference type="HOGENOM" id="CLU_133067_0_1_11"/>
<dbReference type="Proteomes" id="UP000000580">
    <property type="component" value="Chromosome"/>
</dbReference>
<dbReference type="GO" id="GO:0005886">
    <property type="term" value="C:plasma membrane"/>
    <property type="evidence" value="ECO:0007669"/>
    <property type="project" value="UniProtKB-SubCell"/>
</dbReference>
<dbReference type="GO" id="GO:0022857">
    <property type="term" value="F:transmembrane transporter activity"/>
    <property type="evidence" value="ECO:0007669"/>
    <property type="project" value="InterPro"/>
</dbReference>
<dbReference type="GO" id="GO:0046677">
    <property type="term" value="P:response to antibiotic"/>
    <property type="evidence" value="ECO:0007669"/>
    <property type="project" value="UniProtKB-KW"/>
</dbReference>
<dbReference type="FunFam" id="1.10.3730.20:FF:000001">
    <property type="entry name" value="Quaternary ammonium compound resistance transporter SugE"/>
    <property type="match status" value="1"/>
</dbReference>
<dbReference type="Gene3D" id="1.10.3730.20">
    <property type="match status" value="1"/>
</dbReference>
<dbReference type="InterPro" id="IPR000390">
    <property type="entry name" value="Small_drug/metabolite_transptr"/>
</dbReference>
<dbReference type="InterPro" id="IPR045324">
    <property type="entry name" value="Small_multidrug_res"/>
</dbReference>
<dbReference type="PANTHER" id="PTHR30561:SF1">
    <property type="entry name" value="MULTIDRUG TRANSPORTER EMRE"/>
    <property type="match status" value="1"/>
</dbReference>
<dbReference type="PANTHER" id="PTHR30561">
    <property type="entry name" value="SMR FAMILY PROTON-DEPENDENT DRUG EFFLUX TRANSPORTER SUGE"/>
    <property type="match status" value="1"/>
</dbReference>
<dbReference type="Pfam" id="PF00893">
    <property type="entry name" value="Multi_Drug_Res"/>
    <property type="match status" value="1"/>
</dbReference>
<dbReference type="SUPFAM" id="SSF103481">
    <property type="entry name" value="Multidrug resistance efflux transporter EmrE"/>
    <property type="match status" value="1"/>
</dbReference>
<name>MMR_MYCPA</name>